<protein>
    <recommendedName>
        <fullName>STE20-related kinase adapter protein alpha</fullName>
        <shortName>STRAD alpha</shortName>
    </recommendedName>
    <alternativeName>
        <fullName>STE20-related adapter protein</fullName>
    </alternativeName>
    <alternativeName>
        <fullName>Serologically defined breast cancer antigen NY-BR-96</fullName>
    </alternativeName>
</protein>
<feature type="chain" id="PRO_0000260035" description="STE20-related kinase adapter protein alpha">
    <location>
        <begin position="1"/>
        <end position="431"/>
    </location>
</feature>
<feature type="domain" description="Protein kinase" evidence="2">
    <location>
        <begin position="69"/>
        <end position="379"/>
    </location>
</feature>
<feature type="region of interest" description="Disordered" evidence="3">
    <location>
        <begin position="310"/>
        <end position="347"/>
    </location>
</feature>
<feature type="compositionally biased region" description="Polar residues" evidence="3">
    <location>
        <begin position="312"/>
        <end position="339"/>
    </location>
</feature>
<feature type="modified residue" description="Phosphoserine" evidence="19">
    <location>
        <position position="2"/>
    </location>
</feature>
<feature type="modified residue" description="Phosphoserine" evidence="19">
    <location>
        <position position="46"/>
    </location>
</feature>
<feature type="modified residue" description="Phosphothreonine; by LKB1" evidence="4">
    <location>
        <position position="329"/>
    </location>
</feature>
<feature type="modified residue" description="Phosphothreonine; by LKB1" evidence="4">
    <location>
        <position position="419"/>
    </location>
</feature>
<feature type="splice variant" id="VSP_044278" description="In isoform 5." evidence="12">
    <location>
        <begin position="1"/>
        <end position="58"/>
    </location>
</feature>
<feature type="splice variant" id="VSP_052219" description="In isoform 2 and isoform 3." evidence="11 13">
    <location>
        <begin position="5"/>
        <end position="41"/>
    </location>
</feature>
<feature type="splice variant" id="VSP_044717" description="In isoform 6." evidence="11">
    <location>
        <begin position="13"/>
        <end position="41"/>
    </location>
</feature>
<feature type="splice variant" id="VSP_043707" description="In isoform 4." evidence="11">
    <location>
        <begin position="32"/>
        <end position="75"/>
    </location>
</feature>
<feature type="splice variant" id="VSP_043708" description="In isoform 4 and isoform 6." evidence="11">
    <original>DSPSHPYHRTFSPHFHHFVEQCLQRNPDARPSASTLLNHSFFKQIKRRASEALPELLRPVTPITNFEGSQSQDHSGIFGLVTNLEELEVDDWEF</original>
    <variation>PVPAPS</variation>
    <location>
        <begin position="338"/>
        <end position="431"/>
    </location>
</feature>
<feature type="splice variant" id="VSP_052220" description="In isoform 2." evidence="11 13">
    <original>PSASTLLNHSFFKQIKRRASEALPELLRPVTPITNFEGSQSQDHSGIFGL</original>
    <variation>YPCWPGPGLRESRGCSGG</variation>
    <location>
        <begin position="368"/>
        <end position="417"/>
    </location>
</feature>
<feature type="splice variant" id="VSP_052221" description="In isoform 2." evidence="11 13">
    <location>
        <begin position="418"/>
        <end position="431"/>
    </location>
</feature>
<feature type="sequence variant" id="VAR_041377" description="In dbSNP:rs35808156." evidence="8">
    <original>R</original>
    <variation>W</variation>
    <location>
        <position position="13"/>
    </location>
</feature>
<feature type="sequence variant" id="VAR_041378" description="In dbSNP:rs56271007." evidence="8">
    <original>S</original>
    <variation>I</variation>
    <location>
        <position position="60"/>
    </location>
</feature>
<feature type="sequence variant" id="VAR_041379" description="In dbSNP:rs55695051." evidence="8">
    <original>P</original>
    <variation>S</variation>
    <location>
        <position position="64"/>
    </location>
</feature>
<feature type="mutagenesis site" description="Suppresses STK11/LKB1 activation without affecting complex assembly." evidence="9">
    <original>Y</original>
    <variation>F</variation>
    <location>
        <position position="185"/>
    </location>
</feature>
<feature type="mutagenesis site" description="Inhibits interaction with STK11/LKB1; when associated with A-." evidence="9">
    <original>H</original>
    <variation>A</variation>
    <location>
        <position position="231"/>
    </location>
</feature>
<feature type="mutagenesis site" description="Inhibits interaction with STK11/LKB1; when associated with A-." evidence="9">
    <original>F</original>
    <variation>A</variation>
    <location>
        <position position="233"/>
    </location>
</feature>
<feature type="mutagenesis site" description="Inhibits interaction with STK11/LKB1." evidence="9">
    <original>L</original>
    <variation>A</variation>
    <location>
        <position position="241"/>
    </location>
</feature>
<feature type="mutagenesis site" description="Inhibits interaction with STK11/LKB1." evidence="9">
    <original>Q</original>
    <variation>A</variation>
    <location>
        <position position="251"/>
    </location>
</feature>
<feature type="mutagenesis site" description="Loss of STK11/LKB1-mediated phosphorylation." evidence="4">
    <original>T</original>
    <variation>A</variation>
    <location>
        <position position="329"/>
    </location>
</feature>
<feature type="mutagenesis site" description="Loss of STK11/LKB1-mediated phosphorylation." evidence="4">
    <original>T</original>
    <variation>A</variation>
    <location>
        <position position="419"/>
    </location>
</feature>
<feature type="sequence conflict" description="In Ref. 3; BAG62879." evidence="14" ref="3">
    <original>F</original>
    <variation>S</variation>
    <location>
        <position position="163"/>
    </location>
</feature>
<feature type="sequence conflict" description="In Ref. 1; AAG48269." evidence="14" ref="1">
    <original>S</original>
    <variation>W</variation>
    <location>
        <position position="339"/>
    </location>
</feature>
<feature type="sequence conflict" description="In Ref. 3; BAC11349." evidence="14" ref="3">
    <original>N</original>
    <variation>H</variation>
    <location>
        <position position="363"/>
    </location>
</feature>
<feature type="sequence conflict" description="In Ref. 1; AAG48269." evidence="14" ref="1">
    <original>E</original>
    <variation>K</variation>
    <location>
        <position position="388"/>
    </location>
</feature>
<feature type="helix" evidence="21">
    <location>
        <begin position="66"/>
        <end position="68"/>
    </location>
</feature>
<feature type="strand" evidence="21">
    <location>
        <begin position="69"/>
        <end position="78"/>
    </location>
</feature>
<feature type="turn" evidence="21">
    <location>
        <begin position="79"/>
        <end position="82"/>
    </location>
</feature>
<feature type="strand" evidence="21">
    <location>
        <begin position="83"/>
        <end position="90"/>
    </location>
</feature>
<feature type="turn" evidence="21">
    <location>
        <begin position="91"/>
        <end position="93"/>
    </location>
</feature>
<feature type="strand" evidence="21">
    <location>
        <begin position="96"/>
        <end position="103"/>
    </location>
</feature>
<feature type="helix" evidence="21">
    <location>
        <begin position="104"/>
        <end position="106"/>
    </location>
</feature>
<feature type="helix" evidence="21">
    <location>
        <begin position="109"/>
        <end position="124"/>
    </location>
</feature>
<feature type="strand" evidence="21">
    <location>
        <begin position="133"/>
        <end position="139"/>
    </location>
</feature>
<feature type="strand" evidence="21">
    <location>
        <begin position="142"/>
        <end position="148"/>
    </location>
</feature>
<feature type="helix" evidence="21">
    <location>
        <begin position="155"/>
        <end position="161"/>
    </location>
</feature>
<feature type="helix" evidence="21">
    <location>
        <begin position="169"/>
        <end position="188"/>
    </location>
</feature>
<feature type="helix" evidence="21">
    <location>
        <begin position="198"/>
        <end position="200"/>
    </location>
</feature>
<feature type="strand" evidence="21">
    <location>
        <begin position="201"/>
        <end position="203"/>
    </location>
</feature>
<feature type="strand" evidence="21">
    <location>
        <begin position="209"/>
        <end position="211"/>
    </location>
</feature>
<feature type="helix" evidence="21">
    <location>
        <begin position="214"/>
        <end position="216"/>
    </location>
</feature>
<feature type="helix" evidence="21">
    <location>
        <begin position="241"/>
        <end position="243"/>
    </location>
</feature>
<feature type="helix" evidence="21">
    <location>
        <begin position="246"/>
        <end position="249"/>
    </location>
</feature>
<feature type="helix" evidence="21">
    <location>
        <begin position="259"/>
        <end position="274"/>
    </location>
</feature>
<feature type="turn" evidence="21">
    <location>
        <begin position="278"/>
        <end position="281"/>
    </location>
</feature>
<feature type="helix" evidence="21">
    <location>
        <begin position="287"/>
        <end position="290"/>
    </location>
</feature>
<feature type="turn" evidence="22">
    <location>
        <begin position="302"/>
        <end position="304"/>
    </location>
</feature>
<feature type="helix" evidence="21">
    <location>
        <begin position="350"/>
        <end position="359"/>
    </location>
</feature>
<feature type="turn" evidence="21">
    <location>
        <begin position="364"/>
        <end position="366"/>
    </location>
</feature>
<feature type="helix" evidence="21">
    <location>
        <begin position="370"/>
        <end position="373"/>
    </location>
</feature>
<feature type="helix" evidence="21">
    <location>
        <begin position="377"/>
        <end position="381"/>
    </location>
</feature>
<feature type="helix" evidence="20">
    <location>
        <begin position="386"/>
        <end position="388"/>
    </location>
</feature>
<feature type="helix" evidence="21">
    <location>
        <begin position="390"/>
        <end position="393"/>
    </location>
</feature>
<feature type="turn" evidence="21">
    <location>
        <begin position="394"/>
        <end position="396"/>
    </location>
</feature>
<feature type="helix" evidence="20">
    <location>
        <begin position="406"/>
        <end position="409"/>
    </location>
</feature>
<feature type="strand" evidence="20">
    <location>
        <begin position="414"/>
        <end position="416"/>
    </location>
</feature>
<keyword id="KW-0002">3D-structure</keyword>
<keyword id="KW-0025">Alternative splicing</keyword>
<keyword id="KW-0067">ATP-binding</keyword>
<keyword id="KW-0131">Cell cycle</keyword>
<keyword id="KW-0160">Chromosomal rearrangement</keyword>
<keyword id="KW-0963">Cytoplasm</keyword>
<keyword id="KW-0547">Nucleotide-binding</keyword>
<keyword id="KW-0539">Nucleus</keyword>
<keyword id="KW-0597">Phosphoprotein</keyword>
<keyword id="KW-1267">Proteomics identification</keyword>
<keyword id="KW-1185">Reference proteome</keyword>
<evidence type="ECO:0000255" key="1"/>
<evidence type="ECO:0000255" key="2">
    <source>
        <dbReference type="PROSITE-ProRule" id="PRU00159"/>
    </source>
</evidence>
<evidence type="ECO:0000256" key="3">
    <source>
        <dbReference type="SAM" id="MobiDB-lite"/>
    </source>
</evidence>
<evidence type="ECO:0000269" key="4">
    <source>
    </source>
</evidence>
<evidence type="ECO:0000269" key="5">
    <source>
    </source>
</evidence>
<evidence type="ECO:0000269" key="6">
    <source>
    </source>
</evidence>
<evidence type="ECO:0000269" key="7">
    <source>
    </source>
</evidence>
<evidence type="ECO:0000269" key="8">
    <source>
    </source>
</evidence>
<evidence type="ECO:0000269" key="9">
    <source>
    </source>
</evidence>
<evidence type="ECO:0000269" key="10">
    <source ref="2"/>
</evidence>
<evidence type="ECO:0000303" key="11">
    <source>
    </source>
</evidence>
<evidence type="ECO:0000303" key="12">
    <source>
    </source>
</evidence>
<evidence type="ECO:0000303" key="13">
    <source ref="2"/>
</evidence>
<evidence type="ECO:0000305" key="14"/>
<evidence type="ECO:0000312" key="15">
    <source>
        <dbReference type="EMBL" id="AAG48269.1"/>
    </source>
</evidence>
<evidence type="ECO:0000312" key="16">
    <source>
        <dbReference type="EMBL" id="AAP42280.1"/>
    </source>
</evidence>
<evidence type="ECO:0000312" key="17">
    <source>
        <dbReference type="EMBL" id="BAC11349.1"/>
    </source>
</evidence>
<evidence type="ECO:0000312" key="18">
    <source>
        <dbReference type="EMBL" id="DAA01797.1"/>
    </source>
</evidence>
<evidence type="ECO:0007744" key="19">
    <source>
    </source>
</evidence>
<evidence type="ECO:0007829" key="20">
    <source>
        <dbReference type="PDB" id="2WTK"/>
    </source>
</evidence>
<evidence type="ECO:0007829" key="21">
    <source>
        <dbReference type="PDB" id="3GNI"/>
    </source>
</evidence>
<evidence type="ECO:0007829" key="22">
    <source>
        <dbReference type="PDB" id="8VSU"/>
    </source>
</evidence>
<comment type="function">
    <text evidence="4 5 9">Pseudokinase which, in complex with CAB39/MO25 (CAB39/MO25alpha or CAB39L/MO25beta), binds to and activates STK11/LKB1. Adopts a closed conformation typical of active protein kinases and binds STK11/LKB1 as a pseudosubstrate, promoting conformational change of STK11/LKB1 in an active conformation.</text>
</comment>
<comment type="subunit">
    <text evidence="7 9">Component of a trimeric complex composed of STK11/LKB1, STRAD (STRADA or STRADB) and CAB39/MO25 (CAB39/MO25alpha or CAB39L/MO25beta): the complex tethers STK11/LKB1 in the cytoplasm and stimulates its catalytic activity.</text>
</comment>
<comment type="interaction">
    <interactant intactId="EBI-1109114">
        <id>Q7RTN6</id>
    </interactant>
    <interactant intactId="EBI-306905">
        <id>Q9Y376</id>
        <label>CAB39</label>
    </interactant>
    <organismsDiffer>false</organismsDiffer>
    <experiments>4</experiments>
</comment>
<comment type="interaction">
    <interactant intactId="EBI-1109114">
        <id>Q7RTN6</id>
    </interactant>
    <interactant intactId="EBI-306838">
        <id>Q15831</id>
        <label>STK11</label>
    </interactant>
    <organismsDiffer>false</organismsDiffer>
    <experiments>20</experiments>
</comment>
<comment type="interaction">
    <interactant intactId="EBI-15787241">
        <id>Q7RTN6-1</id>
    </interactant>
    <interactant intactId="EBI-306905">
        <id>Q9Y376</id>
        <label>CAB39</label>
    </interactant>
    <organismsDiffer>false</organismsDiffer>
    <experiments>8</experiments>
</comment>
<comment type="interaction">
    <interactant intactId="EBI-15787241">
        <id>Q7RTN6-1</id>
    </interactant>
    <interactant intactId="EBI-306838">
        <id>Q15831</id>
        <label>STK11</label>
    </interactant>
    <organismsDiffer>false</organismsDiffer>
    <experiments>3</experiments>
</comment>
<comment type="subcellular location">
    <subcellularLocation>
        <location evidence="4 5">Nucleus</location>
    </subcellularLocation>
    <subcellularLocation>
        <location evidence="4 5">Cytoplasm</location>
    </subcellularLocation>
</comment>
<comment type="alternative products">
    <event type="alternative splicing"/>
    <isoform>
        <id>Q7RTN6-1</id>
        <name evidence="4">1</name>
        <sequence type="displayed"/>
    </isoform>
    <isoform>
        <id>Q7RTN6-2</id>
        <name evidence="6 10">2</name>
        <sequence type="described" ref="VSP_052219 VSP_052220 VSP_052221"/>
    </isoform>
    <isoform>
        <id>Q7RTN6-3</id>
        <name evidence="6">3</name>
        <sequence type="described" ref="VSP_052219"/>
    </isoform>
    <isoform>
        <id>Q7RTN6-4</id>
        <name>4</name>
        <sequence type="described" ref="VSP_043707 VSP_043708"/>
    </isoform>
    <isoform>
        <id>Q7RTN6-5</id>
        <name>5</name>
        <sequence type="described" ref="VSP_044278"/>
    </isoform>
    <isoform>
        <id>Q7RTN6-6</id>
        <name>6</name>
        <sequence type="described" ref="VSP_044717 VSP_043708"/>
    </isoform>
</comment>
<comment type="domain">
    <text evidence="1">The protein kinase domain is predicted to be catalytically inactive.</text>
</comment>
<comment type="disease">
    <text>A homozygous 7-kb deletion involving STRADA is a cause of a syndrome characterized by polyhydramnios, megalencephaly and symptomatic epilepsy.</text>
</comment>
<comment type="similarity">
    <text evidence="14">Belongs to the protein kinase superfamily. STE Ser/Thr protein kinase family. STE20 subfamily.</text>
</comment>
<accession>Q7RTN6</accession>
<accession>B4DDE3</accession>
<accession>B4DW17</accession>
<accession>J3KTC9</accession>
<accession>Q5JPI2</accession>
<accession>Q7Z4K9</accession>
<accession>Q8NC31</accession>
<accession>Q8NCF1</accession>
<accession>Q9H272</accession>
<gene>
    <name type="primary">STRADA</name>
    <name evidence="16" type="synonym">LYK5</name>
    <name type="synonym">STRAD</name>
</gene>
<sequence length="431" mass="48369">MSFLVSKPERIRRWVSEKFIVEGLRDLELFGEQPPGDTRRKTNDASSESIASFSKQEVMSSFLPEGGCYELLTVIGKGFEDLMTVNLARYKPTGEYVTVRRINLEACSNEMVTFLQGELHVSKLFNHPNIVPYRATFIADNELWVVTSFMAYGSAKDLICTHFMDGMNELAIAYILQGVLKALDYIHHMGYVHRSVKASHILISVDGKVYLSGLRSNLSMISHGQRQRVVHDFPKYSVKVLPWLSPEVLQQNLQGYDAKSDIYSVGITACELANGHVPFKDMPATQMLLEKLNGTVPCLLDTSTIPAEELTMSPSRSVANSGLSDSLTTSTPRPSNGDSPSHPYHRTFSPHFHHFVEQCLQRNPDARPSASTLLNHSFFKQIKRRASEALPELLRPVTPITNFEGSQSQDHSGIFGLVTNLEELEVDDWEF</sequence>
<proteinExistence type="evidence at protein level"/>
<name>STRAA_HUMAN</name>
<reference evidence="14 15" key="1">
    <citation type="journal article" date="2001" name="Cancer Immun.">
        <title>Humoral immunity to human breast cancer: antigen definition and quantitative analysis of mRNA expression.</title>
        <authorList>
            <person name="Scanlan M.J."/>
            <person name="Gout I."/>
            <person name="Gordon C.M."/>
            <person name="Williamson B."/>
            <person name="Stockert E."/>
            <person name="Gure A.O."/>
            <person name="Jaeger D."/>
            <person name="Chen Y.-T."/>
            <person name="Mackay A."/>
            <person name="O'Hare M.J."/>
            <person name="Old L.J."/>
        </authorList>
    </citation>
    <scope>NUCLEOTIDE SEQUENCE [MRNA] (ISOFORM 1)</scope>
    <source>
        <tissue evidence="15">Mammary tumor</tissue>
    </source>
</reference>
<reference evidence="14 16" key="2">
    <citation type="submission" date="2003-08" db="EMBL/GenBank/DDBJ databases">
        <title>Cloning, characterization and localization of lyk5 gene.</title>
        <authorList>
            <person name="Shan Y.X."/>
            <person name="Huang C.Q."/>
            <person name="Yu L."/>
        </authorList>
    </citation>
    <scope>NUCLEOTIDE SEQUENCE [MRNA] (ISOFORM 2)</scope>
</reference>
<reference evidence="14 17" key="3">
    <citation type="journal article" date="2004" name="Nat. Genet.">
        <title>Complete sequencing and characterization of 21,243 full-length human cDNAs.</title>
        <authorList>
            <person name="Ota T."/>
            <person name="Suzuki Y."/>
            <person name="Nishikawa T."/>
            <person name="Otsuki T."/>
            <person name="Sugiyama T."/>
            <person name="Irie R."/>
            <person name="Wakamatsu A."/>
            <person name="Hayashi K."/>
            <person name="Sato H."/>
            <person name="Nagai K."/>
            <person name="Kimura K."/>
            <person name="Makita H."/>
            <person name="Sekine M."/>
            <person name="Obayashi M."/>
            <person name="Nishi T."/>
            <person name="Shibahara T."/>
            <person name="Tanaka T."/>
            <person name="Ishii S."/>
            <person name="Yamamoto J."/>
            <person name="Saito K."/>
            <person name="Kawai Y."/>
            <person name="Isono Y."/>
            <person name="Nakamura Y."/>
            <person name="Nagahari K."/>
            <person name="Murakami K."/>
            <person name="Yasuda T."/>
            <person name="Iwayanagi T."/>
            <person name="Wagatsuma M."/>
            <person name="Shiratori A."/>
            <person name="Sudo H."/>
            <person name="Hosoiri T."/>
            <person name="Kaku Y."/>
            <person name="Kodaira H."/>
            <person name="Kondo H."/>
            <person name="Sugawara M."/>
            <person name="Takahashi M."/>
            <person name="Kanda K."/>
            <person name="Yokoi T."/>
            <person name="Furuya T."/>
            <person name="Kikkawa E."/>
            <person name="Omura Y."/>
            <person name="Abe K."/>
            <person name="Kamihara K."/>
            <person name="Katsuta N."/>
            <person name="Sato K."/>
            <person name="Tanikawa M."/>
            <person name="Yamazaki M."/>
            <person name="Ninomiya K."/>
            <person name="Ishibashi T."/>
            <person name="Yamashita H."/>
            <person name="Murakawa K."/>
            <person name="Fujimori K."/>
            <person name="Tanai H."/>
            <person name="Kimata M."/>
            <person name="Watanabe M."/>
            <person name="Hiraoka S."/>
            <person name="Chiba Y."/>
            <person name="Ishida S."/>
            <person name="Ono Y."/>
            <person name="Takiguchi S."/>
            <person name="Watanabe S."/>
            <person name="Yosida M."/>
            <person name="Hotuta T."/>
            <person name="Kusano J."/>
            <person name="Kanehori K."/>
            <person name="Takahashi-Fujii A."/>
            <person name="Hara H."/>
            <person name="Tanase T.-O."/>
            <person name="Nomura Y."/>
            <person name="Togiya S."/>
            <person name="Komai F."/>
            <person name="Hara R."/>
            <person name="Takeuchi K."/>
            <person name="Arita M."/>
            <person name="Imose N."/>
            <person name="Musashino K."/>
            <person name="Yuuki H."/>
            <person name="Oshima A."/>
            <person name="Sasaki N."/>
            <person name="Aotsuka S."/>
            <person name="Yoshikawa Y."/>
            <person name="Matsunawa H."/>
            <person name="Ichihara T."/>
            <person name="Shiohata N."/>
            <person name="Sano S."/>
            <person name="Moriya S."/>
            <person name="Momiyama H."/>
            <person name="Satoh N."/>
            <person name="Takami S."/>
            <person name="Terashima Y."/>
            <person name="Suzuki O."/>
            <person name="Nakagawa S."/>
            <person name="Senoh A."/>
            <person name="Mizoguchi H."/>
            <person name="Goto Y."/>
            <person name="Shimizu F."/>
            <person name="Wakebe H."/>
            <person name="Hishigaki H."/>
            <person name="Watanabe T."/>
            <person name="Sugiyama A."/>
            <person name="Takemoto M."/>
            <person name="Kawakami B."/>
            <person name="Yamazaki M."/>
            <person name="Watanabe K."/>
            <person name="Kumagai A."/>
            <person name="Itakura S."/>
            <person name="Fukuzumi Y."/>
            <person name="Fujimori Y."/>
            <person name="Komiyama M."/>
            <person name="Tashiro H."/>
            <person name="Tanigami A."/>
            <person name="Fujiwara T."/>
            <person name="Ono T."/>
            <person name="Yamada K."/>
            <person name="Fujii Y."/>
            <person name="Ozaki K."/>
            <person name="Hirao M."/>
            <person name="Ohmori Y."/>
            <person name="Kawabata A."/>
            <person name="Hikiji T."/>
            <person name="Kobatake N."/>
            <person name="Inagaki H."/>
            <person name="Ikema Y."/>
            <person name="Okamoto S."/>
            <person name="Okitani R."/>
            <person name="Kawakami T."/>
            <person name="Noguchi S."/>
            <person name="Itoh T."/>
            <person name="Shigeta K."/>
            <person name="Senba T."/>
            <person name="Matsumura K."/>
            <person name="Nakajima Y."/>
            <person name="Mizuno T."/>
            <person name="Morinaga M."/>
            <person name="Sasaki M."/>
            <person name="Togashi T."/>
            <person name="Oyama M."/>
            <person name="Hata H."/>
            <person name="Watanabe M."/>
            <person name="Komatsu T."/>
            <person name="Mizushima-Sugano J."/>
            <person name="Satoh T."/>
            <person name="Shirai Y."/>
            <person name="Takahashi Y."/>
            <person name="Nakagawa K."/>
            <person name="Okumura K."/>
            <person name="Nagase T."/>
            <person name="Nomura N."/>
            <person name="Kikuchi H."/>
            <person name="Masuho Y."/>
            <person name="Yamashita R."/>
            <person name="Nakai K."/>
            <person name="Yada T."/>
            <person name="Nakamura Y."/>
            <person name="Ohara O."/>
            <person name="Isogai T."/>
            <person name="Sugano S."/>
        </authorList>
    </citation>
    <scope>NUCLEOTIDE SEQUENCE [LARGE SCALE MRNA] (ISOFORMS 2; 3; 4 AND 6)</scope>
    <source>
        <tissue>Synovium</tissue>
        <tissue evidence="14 17">Teratocarcinoma</tissue>
    </source>
</reference>
<reference key="4">
    <citation type="journal article" date="2007" name="BMC Genomics">
        <title>The full-ORF clone resource of the German cDNA consortium.</title>
        <authorList>
            <person name="Bechtel S."/>
            <person name="Rosenfelder H."/>
            <person name="Duda A."/>
            <person name="Schmidt C.P."/>
            <person name="Ernst U."/>
            <person name="Wellenreuther R."/>
            <person name="Mehrle A."/>
            <person name="Schuster C."/>
            <person name="Bahr A."/>
            <person name="Bloecker H."/>
            <person name="Heubner D."/>
            <person name="Hoerlein A."/>
            <person name="Michel G."/>
            <person name="Wedler H."/>
            <person name="Koehrer K."/>
            <person name="Ottenwaelder B."/>
            <person name="Poustka A."/>
            <person name="Wiemann S."/>
            <person name="Schupp I."/>
        </authorList>
    </citation>
    <scope>NUCLEOTIDE SEQUENCE [LARGE SCALE MRNA] (ISOFORM 5)</scope>
    <source>
        <tissue>Lymph node</tissue>
    </source>
</reference>
<reference key="5">
    <citation type="journal article" date="2006" name="Nature">
        <title>DNA sequence of human chromosome 17 and analysis of rearrangement in the human lineage.</title>
        <authorList>
            <person name="Zody M.C."/>
            <person name="Garber M."/>
            <person name="Adams D.J."/>
            <person name="Sharpe T."/>
            <person name="Harrow J."/>
            <person name="Lupski J.R."/>
            <person name="Nicholson C."/>
            <person name="Searle S.M."/>
            <person name="Wilming L."/>
            <person name="Young S.K."/>
            <person name="Abouelleil A."/>
            <person name="Allen N.R."/>
            <person name="Bi W."/>
            <person name="Bloom T."/>
            <person name="Borowsky M.L."/>
            <person name="Bugalter B.E."/>
            <person name="Butler J."/>
            <person name="Chang J.L."/>
            <person name="Chen C.-K."/>
            <person name="Cook A."/>
            <person name="Corum B."/>
            <person name="Cuomo C.A."/>
            <person name="de Jong P.J."/>
            <person name="DeCaprio D."/>
            <person name="Dewar K."/>
            <person name="FitzGerald M."/>
            <person name="Gilbert J."/>
            <person name="Gibson R."/>
            <person name="Gnerre S."/>
            <person name="Goldstein S."/>
            <person name="Grafham D.V."/>
            <person name="Grocock R."/>
            <person name="Hafez N."/>
            <person name="Hagopian D.S."/>
            <person name="Hart E."/>
            <person name="Norman C.H."/>
            <person name="Humphray S."/>
            <person name="Jaffe D.B."/>
            <person name="Jones M."/>
            <person name="Kamal M."/>
            <person name="Khodiyar V.K."/>
            <person name="LaButti K."/>
            <person name="Laird G."/>
            <person name="Lehoczky J."/>
            <person name="Liu X."/>
            <person name="Lokyitsang T."/>
            <person name="Loveland J."/>
            <person name="Lui A."/>
            <person name="Macdonald P."/>
            <person name="Major J.E."/>
            <person name="Matthews L."/>
            <person name="Mauceli E."/>
            <person name="McCarroll S.A."/>
            <person name="Mihalev A.H."/>
            <person name="Mudge J."/>
            <person name="Nguyen C."/>
            <person name="Nicol R."/>
            <person name="O'Leary S.B."/>
            <person name="Osoegawa K."/>
            <person name="Schwartz D.C."/>
            <person name="Shaw-Smith C."/>
            <person name="Stankiewicz P."/>
            <person name="Steward C."/>
            <person name="Swarbreck D."/>
            <person name="Venkataraman V."/>
            <person name="Whittaker C.A."/>
            <person name="Yang X."/>
            <person name="Zimmer A.R."/>
            <person name="Bradley A."/>
            <person name="Hubbard T."/>
            <person name="Birren B.W."/>
            <person name="Rogers J."/>
            <person name="Lander E.S."/>
            <person name="Nusbaum C."/>
        </authorList>
    </citation>
    <scope>NUCLEOTIDE SEQUENCE [LARGE SCALE GENOMIC DNA]</scope>
</reference>
<reference evidence="14 16" key="6">
    <citation type="submission" date="2005-09" db="EMBL/GenBank/DDBJ databases">
        <authorList>
            <person name="Mural R.J."/>
            <person name="Istrail S."/>
            <person name="Sutton G."/>
            <person name="Florea L."/>
            <person name="Halpern A.L."/>
            <person name="Mobarry C.M."/>
            <person name="Lippert R."/>
            <person name="Walenz B."/>
            <person name="Shatkay H."/>
            <person name="Dew I."/>
            <person name="Miller J.R."/>
            <person name="Flanigan M.J."/>
            <person name="Edwards N.J."/>
            <person name="Bolanos R."/>
            <person name="Fasulo D."/>
            <person name="Halldorsson B.V."/>
            <person name="Hannenhalli S."/>
            <person name="Turner R."/>
            <person name="Yooseph S."/>
            <person name="Lu F."/>
            <person name="Nusskern D.R."/>
            <person name="Shue B.C."/>
            <person name="Zheng X.H."/>
            <person name="Zhong F."/>
            <person name="Delcher A.L."/>
            <person name="Huson D.H."/>
            <person name="Kravitz S.A."/>
            <person name="Mouchard L."/>
            <person name="Reinert K."/>
            <person name="Remington K.A."/>
            <person name="Clark A.G."/>
            <person name="Waterman M.S."/>
            <person name="Eichler E.E."/>
            <person name="Adams M.D."/>
            <person name="Hunkapiller M.W."/>
            <person name="Myers E.W."/>
            <person name="Venter J.C."/>
        </authorList>
    </citation>
    <scope>NUCLEOTIDE SEQUENCE [LARGE SCALE GENOMIC DNA]</scope>
</reference>
<reference evidence="14 18" key="7">
    <citation type="journal article" date="2003" name="EMBO J.">
        <title>Activation of the tumour suppressor kinase LKB1 by the STE20-like pseudokinase STRAD.</title>
        <authorList>
            <person name="Baas A.F."/>
            <person name="Boudeau J."/>
            <person name="Sapkota G.P."/>
            <person name="Smit L."/>
            <person name="Medema R."/>
            <person name="Morrice N.A."/>
            <person name="Alessi D.R."/>
            <person name="Clevers H.C."/>
        </authorList>
    </citation>
    <scope>IDENTIFICATION (ISOFORM 1)</scope>
    <scope>FUNCTION</scope>
    <scope>SUBCELLULAR LOCATION</scope>
    <scope>INTERACTION WITH STK11/LKB1</scope>
    <scope>MUTAGENESIS OF THR-329 AND THR-419</scope>
    <scope>PHOSPHORYLATION AT THR-329 AND THR-419</scope>
</reference>
<reference evidence="14" key="8">
    <citation type="journal article" date="2003" name="EMBO J.">
        <title>MO25alpha/beta interact with STRADalpha/beta enhancing their ability to bind, activate and localize LKB1 in the cytoplasm.</title>
        <authorList>
            <person name="Boudeau J."/>
            <person name="Baas A.F."/>
            <person name="Deak M."/>
            <person name="Morrice N.A."/>
            <person name="Kieloch A."/>
            <person name="Schutkowski M."/>
            <person name="Prescott A.R."/>
            <person name="Clevers H.C."/>
            <person name="Alessi D.R."/>
        </authorList>
    </citation>
    <scope>FUNCTION</scope>
    <scope>SUBCELLULAR LOCATION</scope>
    <scope>INTERACTION WITH STK11/LKB1 AND CAB39</scope>
</reference>
<reference key="9">
    <citation type="journal article" date="2007" name="Brain">
        <title>Polyhydramnios, megalencephaly and symptomatic epilepsy caused by a homozygous 7-kilobase deletion in LYK5.</title>
        <authorList>
            <person name="Puffenberger E.G."/>
            <person name="Strauss K.A."/>
            <person name="Ramsey K.E."/>
            <person name="Craig D.W."/>
            <person name="Stephan D.A."/>
            <person name="Robinson D.L."/>
            <person name="Hendrickson C.L."/>
            <person name="Gottlieb S."/>
            <person name="Ramsay D.A."/>
            <person name="Siu V.M."/>
            <person name="Heuer G.G."/>
            <person name="Crino P.B."/>
            <person name="Morton D.H."/>
        </authorList>
    </citation>
    <scope>INVOLVEMENT IN PMSE</scope>
</reference>
<reference key="10">
    <citation type="journal article" date="2009" name="Mol. Cell. Proteomics">
        <title>Large-scale proteomics analysis of the human kinome.</title>
        <authorList>
            <person name="Oppermann F.S."/>
            <person name="Gnad F."/>
            <person name="Olsen J.V."/>
            <person name="Hornberger R."/>
            <person name="Greff Z."/>
            <person name="Keri G."/>
            <person name="Mann M."/>
            <person name="Daub H."/>
        </authorList>
    </citation>
    <scope>IDENTIFICATION BY MASS SPECTROMETRY [LARGE SCALE ANALYSIS]</scope>
</reference>
<reference key="11">
    <citation type="journal article" date="2013" name="J. Proteome Res.">
        <title>Toward a comprehensive characterization of a human cancer cell phosphoproteome.</title>
        <authorList>
            <person name="Zhou H."/>
            <person name="Di Palma S."/>
            <person name="Preisinger C."/>
            <person name="Peng M."/>
            <person name="Polat A.N."/>
            <person name="Heck A.J."/>
            <person name="Mohammed S."/>
        </authorList>
    </citation>
    <scope>PHOSPHORYLATION [LARGE SCALE ANALYSIS] AT SER-2 AND SER-46</scope>
    <scope>IDENTIFICATION BY MASS SPECTROMETRY [LARGE SCALE ANALYSIS]</scope>
    <source>
        <tissue>Erythroleukemia</tissue>
    </source>
</reference>
<reference evidence="14" key="12">
    <citation type="journal article" date="2004" name="Nat. Struct. Mol. Biol.">
        <title>Crystal structure of MO25 alpha in complex with the C-terminus of the pseudo kinase STE20-related adaptor.</title>
        <authorList>
            <person name="Milburn C.C."/>
            <person name="Boudeau J."/>
            <person name="Deak M."/>
            <person name="Alessi D.R."/>
            <person name="van Aalten D.M."/>
        </authorList>
    </citation>
    <scope>X-RAY CRYSTALLOGRAPHY (1.85 ANGSTROMS) IN COMPLEX WITH CAB39</scope>
</reference>
<reference key="13">
    <citation type="journal article" date="2009" name="Science">
        <title>Structure of the LKB1-STRAD-MO25 complex reveals an allosteric mechanism of kinase activation.</title>
        <authorList>
            <person name="Zeqiraj E."/>
            <person name="Filippi B.M."/>
            <person name="Deak M."/>
            <person name="Alessi D.R."/>
            <person name="van Aalten D.M."/>
        </authorList>
    </citation>
    <scope>X-RAY CRYSTALLOGRAPHY (2.65 ANGSTROMS) OF 59-431 IN COMPLEX WITH STK11/LKB1 AND CAB39</scope>
    <scope>IDENTIFICATION IN A COMPLEX WITH STK11/LKB1 AND CAB39</scope>
    <scope>FUNCTION</scope>
    <scope>MUTAGENESIS OF TYR-185; HIS-231; PHE-233; LEU-241 AND GLN-251</scope>
</reference>
<reference key="14">
    <citation type="journal article" date="2007" name="Nature">
        <title>Patterns of somatic mutation in human cancer genomes.</title>
        <authorList>
            <person name="Greenman C."/>
            <person name="Stephens P."/>
            <person name="Smith R."/>
            <person name="Dalgliesh G.L."/>
            <person name="Hunter C."/>
            <person name="Bignell G."/>
            <person name="Davies H."/>
            <person name="Teague J."/>
            <person name="Butler A."/>
            <person name="Stevens C."/>
            <person name="Edkins S."/>
            <person name="O'Meara S."/>
            <person name="Vastrik I."/>
            <person name="Schmidt E.E."/>
            <person name="Avis T."/>
            <person name="Barthorpe S."/>
            <person name="Bhamra G."/>
            <person name="Buck G."/>
            <person name="Choudhury B."/>
            <person name="Clements J."/>
            <person name="Cole J."/>
            <person name="Dicks E."/>
            <person name="Forbes S."/>
            <person name="Gray K."/>
            <person name="Halliday K."/>
            <person name="Harrison R."/>
            <person name="Hills K."/>
            <person name="Hinton J."/>
            <person name="Jenkinson A."/>
            <person name="Jones D."/>
            <person name="Menzies A."/>
            <person name="Mironenko T."/>
            <person name="Perry J."/>
            <person name="Raine K."/>
            <person name="Richardson D."/>
            <person name="Shepherd R."/>
            <person name="Small A."/>
            <person name="Tofts C."/>
            <person name="Varian J."/>
            <person name="Webb T."/>
            <person name="West S."/>
            <person name="Widaa S."/>
            <person name="Yates A."/>
            <person name="Cahill D.P."/>
            <person name="Louis D.N."/>
            <person name="Goldstraw P."/>
            <person name="Nicholson A.G."/>
            <person name="Brasseur F."/>
            <person name="Looijenga L."/>
            <person name="Weber B.L."/>
            <person name="Chiew Y.-E."/>
            <person name="DeFazio A."/>
            <person name="Greaves M.F."/>
            <person name="Green A.R."/>
            <person name="Campbell P."/>
            <person name="Birney E."/>
            <person name="Easton D.F."/>
            <person name="Chenevix-Trench G."/>
            <person name="Tan M.-H."/>
            <person name="Khoo S.K."/>
            <person name="Teh B.T."/>
            <person name="Yuen S.T."/>
            <person name="Leung S.Y."/>
            <person name="Wooster R."/>
            <person name="Futreal P.A."/>
            <person name="Stratton M.R."/>
        </authorList>
    </citation>
    <scope>VARIANTS [LARGE SCALE ANALYSIS] TRP-13; ILE-60 AND SER-64</scope>
</reference>
<organism>
    <name type="scientific">Homo sapiens</name>
    <name type="common">Human</name>
    <dbReference type="NCBI Taxonomy" id="9606"/>
    <lineage>
        <taxon>Eukaryota</taxon>
        <taxon>Metazoa</taxon>
        <taxon>Chordata</taxon>
        <taxon>Craniata</taxon>
        <taxon>Vertebrata</taxon>
        <taxon>Euteleostomi</taxon>
        <taxon>Mammalia</taxon>
        <taxon>Eutheria</taxon>
        <taxon>Euarchontoglires</taxon>
        <taxon>Primates</taxon>
        <taxon>Haplorrhini</taxon>
        <taxon>Catarrhini</taxon>
        <taxon>Hominidae</taxon>
        <taxon>Homo</taxon>
    </lineage>
</organism>
<dbReference type="EMBL" id="AF308302">
    <property type="protein sequence ID" value="AAG48269.1"/>
    <property type="molecule type" value="mRNA"/>
</dbReference>
<dbReference type="EMBL" id="AY290821">
    <property type="protein sequence ID" value="AAP42280.1"/>
    <property type="molecule type" value="mRNA"/>
</dbReference>
<dbReference type="EMBL" id="AK074771">
    <property type="protein sequence ID" value="BAC11197.1"/>
    <property type="molecule type" value="mRNA"/>
</dbReference>
<dbReference type="EMBL" id="AK075005">
    <property type="protein sequence ID" value="BAC11349.1"/>
    <property type="molecule type" value="mRNA"/>
</dbReference>
<dbReference type="EMBL" id="AK293160">
    <property type="protein sequence ID" value="BAG56704.1"/>
    <property type="molecule type" value="mRNA"/>
</dbReference>
<dbReference type="EMBL" id="AK301331">
    <property type="protein sequence ID" value="BAG62879.1"/>
    <property type="molecule type" value="mRNA"/>
</dbReference>
<dbReference type="EMBL" id="AL832407">
    <property type="protein sequence ID" value="CAI46194.1"/>
    <property type="molecule type" value="mRNA"/>
</dbReference>
<dbReference type="EMBL" id="AC015651">
    <property type="status" value="NOT_ANNOTATED_CDS"/>
    <property type="molecule type" value="Genomic_DNA"/>
</dbReference>
<dbReference type="EMBL" id="AC046185">
    <property type="status" value="NOT_ANNOTATED_CDS"/>
    <property type="molecule type" value="Genomic_DNA"/>
</dbReference>
<dbReference type="EMBL" id="CH471109">
    <property type="protein sequence ID" value="EAW94283.1"/>
    <property type="molecule type" value="Genomic_DNA"/>
</dbReference>
<dbReference type="EMBL" id="BK001542">
    <property type="protein sequence ID" value="DAA01797.1"/>
    <property type="molecule type" value="mRNA"/>
</dbReference>
<dbReference type="CCDS" id="CCDS11642.1">
    <molecule id="Q7RTN6-2"/>
</dbReference>
<dbReference type="CCDS" id="CCDS32703.1">
    <molecule id="Q7RTN6-1"/>
</dbReference>
<dbReference type="CCDS" id="CCDS42367.1">
    <molecule id="Q7RTN6-5"/>
</dbReference>
<dbReference type="CCDS" id="CCDS54156.1">
    <molecule id="Q7RTN6-4"/>
</dbReference>
<dbReference type="CCDS" id="CCDS58585.1">
    <molecule id="Q7RTN6-6"/>
</dbReference>
<dbReference type="CCDS" id="CCDS86632.1">
    <molecule id="Q7RTN6-3"/>
</dbReference>
<dbReference type="RefSeq" id="NP_001003786.1">
    <molecule id="Q7RTN6-3"/>
    <property type="nucleotide sequence ID" value="NM_001003786.3"/>
</dbReference>
<dbReference type="RefSeq" id="NP_001003787.1">
    <molecule id="Q7RTN6-1"/>
    <property type="nucleotide sequence ID" value="NM_001003787.4"/>
</dbReference>
<dbReference type="RefSeq" id="NP_001003788.1">
    <molecule id="Q7RTN6-5"/>
    <property type="nucleotide sequence ID" value="NM_001003788.3"/>
</dbReference>
<dbReference type="RefSeq" id="NP_001159441.1">
    <molecule id="Q7RTN6-6"/>
    <property type="nucleotide sequence ID" value="NM_001165969.2"/>
</dbReference>
<dbReference type="RefSeq" id="NP_001159442.1">
    <molecule id="Q7RTN6-4"/>
    <property type="nucleotide sequence ID" value="NM_001165970.2"/>
</dbReference>
<dbReference type="RefSeq" id="NP_699166.2">
    <molecule id="Q7RTN6-2"/>
    <property type="nucleotide sequence ID" value="NM_153335.5"/>
</dbReference>
<dbReference type="RefSeq" id="XP_005257856.1">
    <property type="nucleotide sequence ID" value="XM_005257799.2"/>
</dbReference>
<dbReference type="PDB" id="1UPK">
    <property type="method" value="X-ray"/>
    <property type="resolution" value="1.85 A"/>
    <property type="chains" value="B=420-431"/>
</dbReference>
<dbReference type="PDB" id="2WTK">
    <property type="method" value="X-ray"/>
    <property type="resolution" value="2.65 A"/>
    <property type="chains" value="B/E=59-431"/>
</dbReference>
<dbReference type="PDB" id="3GNI">
    <property type="method" value="X-ray"/>
    <property type="resolution" value="2.35 A"/>
    <property type="chains" value="B=59-431"/>
</dbReference>
<dbReference type="PDB" id="8VSU">
    <property type="method" value="EM"/>
    <property type="resolution" value="2.86 A"/>
    <property type="chains" value="B=42-431"/>
</dbReference>
<dbReference type="PDBsum" id="1UPK"/>
<dbReference type="PDBsum" id="2WTK"/>
<dbReference type="PDBsum" id="3GNI"/>
<dbReference type="PDBsum" id="8VSU"/>
<dbReference type="EMDB" id="EMD-43506"/>
<dbReference type="SMR" id="Q7RTN6"/>
<dbReference type="BioGRID" id="124934">
    <property type="interactions" value="26"/>
</dbReference>
<dbReference type="ComplexPortal" id="CPX-2431">
    <property type="entry name" value="LKB1-STRAD-MO25 serine/threonine protein kinase complex, CAB39L-STRADA variant"/>
</dbReference>
<dbReference type="ComplexPortal" id="CPX-2845">
    <property type="entry name" value="LKB1-STRAD-MO25 serine/threonine protein kinase complex, CAB39-STRADA variant"/>
</dbReference>
<dbReference type="CORUM" id="Q7RTN6"/>
<dbReference type="DIP" id="DIP-35775N"/>
<dbReference type="FunCoup" id="Q7RTN6">
    <property type="interactions" value="3381"/>
</dbReference>
<dbReference type="IntAct" id="Q7RTN6">
    <property type="interactions" value="21"/>
</dbReference>
<dbReference type="MINT" id="Q7RTN6"/>
<dbReference type="STRING" id="9606.ENSP00000336655"/>
<dbReference type="ChEMBL" id="CHEMBL1795198"/>
<dbReference type="DrugCentral" id="Q7RTN6"/>
<dbReference type="GlyGen" id="Q7RTN6">
    <property type="glycosylation" value="2 sites, 1 N-linked glycan (1 site), 1 O-linked glycan (1 site)"/>
</dbReference>
<dbReference type="iPTMnet" id="Q7RTN6"/>
<dbReference type="PhosphoSitePlus" id="Q7RTN6"/>
<dbReference type="BioMuta" id="STRADA"/>
<dbReference type="DMDM" id="74759034"/>
<dbReference type="jPOST" id="Q7RTN6"/>
<dbReference type="MassIVE" id="Q7RTN6"/>
<dbReference type="PaxDb" id="9606-ENSP00000336655"/>
<dbReference type="PeptideAtlas" id="Q7RTN6"/>
<dbReference type="ProteomicsDB" id="63016"/>
<dbReference type="ProteomicsDB" id="68873">
    <molecule id="Q7RTN6-1"/>
</dbReference>
<dbReference type="ProteomicsDB" id="68874">
    <molecule id="Q7RTN6-2"/>
</dbReference>
<dbReference type="ProteomicsDB" id="68875">
    <molecule id="Q7RTN6-3"/>
</dbReference>
<dbReference type="ProteomicsDB" id="68876">
    <molecule id="Q7RTN6-4"/>
</dbReference>
<dbReference type="Pumba" id="Q7RTN6"/>
<dbReference type="TopDownProteomics" id="Q7RTN6-4">
    <molecule id="Q7RTN6-4"/>
</dbReference>
<dbReference type="Antibodypedia" id="64277">
    <property type="antibodies" value="350 antibodies from 31 providers"/>
</dbReference>
<dbReference type="DNASU" id="92335"/>
<dbReference type="Ensembl" id="ENST00000336174.12">
    <molecule id="Q7RTN6-1"/>
    <property type="protein sequence ID" value="ENSP00000336655.6"/>
    <property type="gene ID" value="ENSG00000266173.7"/>
</dbReference>
<dbReference type="Ensembl" id="ENST00000375840.9">
    <molecule id="Q7RTN6-5"/>
    <property type="protein sequence ID" value="ENSP00000365000.4"/>
    <property type="gene ID" value="ENSG00000266173.7"/>
</dbReference>
<dbReference type="Ensembl" id="ENST00000392950.9">
    <molecule id="Q7RTN6-2"/>
    <property type="protein sequence ID" value="ENSP00000376677.4"/>
    <property type="gene ID" value="ENSG00000266173.7"/>
</dbReference>
<dbReference type="Ensembl" id="ENST00000447001.8">
    <molecule id="Q7RTN6-4"/>
    <property type="protein sequence ID" value="ENSP00000398841.3"/>
    <property type="gene ID" value="ENSG00000266173.7"/>
</dbReference>
<dbReference type="Ensembl" id="ENST00000582137.6">
    <molecule id="Q7RTN6-6"/>
    <property type="protein sequence ID" value="ENSP00000462922.1"/>
    <property type="gene ID" value="ENSG00000266173.7"/>
</dbReference>
<dbReference type="Ensembl" id="ENST00000638702.1">
    <molecule id="Q7RTN6-5"/>
    <property type="protein sequence ID" value="ENSP00000491017.1"/>
    <property type="gene ID" value="ENSG00000266173.7"/>
</dbReference>
<dbReference type="Ensembl" id="ENST00000639835.1">
    <molecule id="Q7RTN6-3"/>
    <property type="protein sequence ID" value="ENSP00000492578.1"/>
    <property type="gene ID" value="ENSG00000266173.7"/>
</dbReference>
<dbReference type="Ensembl" id="ENST00000640999.1">
    <molecule id="Q7RTN6-3"/>
    <property type="protein sequence ID" value="ENSP00000491643.1"/>
    <property type="gene ID" value="ENSG00000266173.7"/>
</dbReference>
<dbReference type="GeneID" id="92335"/>
<dbReference type="KEGG" id="hsa:92335"/>
<dbReference type="MANE-Select" id="ENST00000336174.12">
    <property type="protein sequence ID" value="ENSP00000336655.6"/>
    <property type="RefSeq nucleotide sequence ID" value="NM_001003787.4"/>
    <property type="RefSeq protein sequence ID" value="NP_001003787.1"/>
</dbReference>
<dbReference type="UCSC" id="uc002jbm.4">
    <molecule id="Q7RTN6-1"/>
    <property type="organism name" value="human"/>
</dbReference>
<dbReference type="AGR" id="HGNC:30172"/>
<dbReference type="CTD" id="92335"/>
<dbReference type="DisGeNET" id="92335"/>
<dbReference type="GeneCards" id="STRADA"/>
<dbReference type="HGNC" id="HGNC:30172">
    <property type="gene designation" value="STRADA"/>
</dbReference>
<dbReference type="HPA" id="ENSG00000266173">
    <property type="expression patterns" value="Low tissue specificity"/>
</dbReference>
<dbReference type="MalaCards" id="STRADA"/>
<dbReference type="MIM" id="608626">
    <property type="type" value="gene"/>
</dbReference>
<dbReference type="MIM" id="611087">
    <property type="type" value="phenotype"/>
</dbReference>
<dbReference type="neXtProt" id="NX_Q7RTN6"/>
<dbReference type="OpenTargets" id="ENSG00000266173"/>
<dbReference type="Orphanet" id="500533">
    <property type="disease" value="Polyhydramnios-megalencephaly-symptomatic epilepsy syndrome"/>
</dbReference>
<dbReference type="PharmGKB" id="PA164726342"/>
<dbReference type="VEuPathDB" id="HostDB:ENSG00000266173"/>
<dbReference type="eggNOG" id="KOG0582">
    <property type="taxonomic scope" value="Eukaryota"/>
</dbReference>
<dbReference type="GeneTree" id="ENSGT00940000158827"/>
<dbReference type="InParanoid" id="Q7RTN6"/>
<dbReference type="OMA" id="INGVMPF"/>
<dbReference type="OrthoDB" id="840771at2759"/>
<dbReference type="PAN-GO" id="Q7RTN6">
    <property type="GO annotations" value="4 GO annotations based on evolutionary models"/>
</dbReference>
<dbReference type="PhylomeDB" id="Q7RTN6"/>
<dbReference type="TreeFam" id="TF319817"/>
<dbReference type="PathwayCommons" id="Q7RTN6"/>
<dbReference type="Reactome" id="R-HSA-380972">
    <property type="pathway name" value="Energy dependent regulation of mTOR by LKB1-AMPK"/>
</dbReference>
<dbReference type="SignaLink" id="Q7RTN6"/>
<dbReference type="SIGNOR" id="Q7RTN6"/>
<dbReference type="BioGRID-ORCS" id="92335">
    <property type="hits" value="19 hits in 1189 CRISPR screens"/>
</dbReference>
<dbReference type="ChiTaRS" id="STRADA">
    <property type="organism name" value="human"/>
</dbReference>
<dbReference type="EvolutionaryTrace" id="Q7RTN6"/>
<dbReference type="GeneWiki" id="LYK5"/>
<dbReference type="GenomeRNAi" id="92335"/>
<dbReference type="Pharos" id="Q7RTN6">
    <property type="development level" value="Tbio"/>
</dbReference>
<dbReference type="PRO" id="PR:Q7RTN6"/>
<dbReference type="Proteomes" id="UP000005640">
    <property type="component" value="Chromosome 17"/>
</dbReference>
<dbReference type="RNAct" id="Q7RTN6">
    <property type="molecule type" value="protein"/>
</dbReference>
<dbReference type="Bgee" id="ENSG00000266173">
    <property type="expression patterns" value="Expressed in right uterine tube and 94 other cell types or tissues"/>
</dbReference>
<dbReference type="ExpressionAtlas" id="Q7RTN6">
    <property type="expression patterns" value="baseline and differential"/>
</dbReference>
<dbReference type="GO" id="GO:0005737">
    <property type="term" value="C:cytoplasm"/>
    <property type="evidence" value="ECO:0000314"/>
    <property type="project" value="UniProtKB"/>
</dbReference>
<dbReference type="GO" id="GO:0005829">
    <property type="term" value="C:cytosol"/>
    <property type="evidence" value="ECO:0000314"/>
    <property type="project" value="HPA"/>
</dbReference>
<dbReference type="GO" id="GO:0140535">
    <property type="term" value="C:intracellular protein-containing complex"/>
    <property type="evidence" value="ECO:0000314"/>
    <property type="project" value="UniProtKB"/>
</dbReference>
<dbReference type="GO" id="GO:0005654">
    <property type="term" value="C:nucleoplasm"/>
    <property type="evidence" value="ECO:0000314"/>
    <property type="project" value="HPA"/>
</dbReference>
<dbReference type="GO" id="GO:0005634">
    <property type="term" value="C:nucleus"/>
    <property type="evidence" value="ECO:0000314"/>
    <property type="project" value="UniProtKB"/>
</dbReference>
<dbReference type="GO" id="GO:1902554">
    <property type="term" value="C:serine/threonine protein kinase complex"/>
    <property type="evidence" value="ECO:0000353"/>
    <property type="project" value="ComplexPortal"/>
</dbReference>
<dbReference type="GO" id="GO:0005524">
    <property type="term" value="F:ATP binding"/>
    <property type="evidence" value="ECO:0007669"/>
    <property type="project" value="UniProtKB-KW"/>
</dbReference>
<dbReference type="GO" id="GO:0019900">
    <property type="term" value="F:kinase binding"/>
    <property type="evidence" value="ECO:0000353"/>
    <property type="project" value="BHF-UCL"/>
</dbReference>
<dbReference type="GO" id="GO:0030295">
    <property type="term" value="F:protein kinase activator activity"/>
    <property type="evidence" value="ECO:0000314"/>
    <property type="project" value="UniProtKB"/>
</dbReference>
<dbReference type="GO" id="GO:0043539">
    <property type="term" value="F:protein serine/threonine kinase activator activity"/>
    <property type="evidence" value="ECO:0000314"/>
    <property type="project" value="UniProtKB"/>
</dbReference>
<dbReference type="GO" id="GO:0032147">
    <property type="term" value="P:activation of protein kinase activity"/>
    <property type="evidence" value="ECO:0000314"/>
    <property type="project" value="UniProtKB"/>
</dbReference>
<dbReference type="GO" id="GO:0070314">
    <property type="term" value="P:G1 to G0 transition"/>
    <property type="evidence" value="ECO:0000353"/>
    <property type="project" value="UniProtKB"/>
</dbReference>
<dbReference type="GO" id="GO:0006611">
    <property type="term" value="P:protein export from nucleus"/>
    <property type="evidence" value="ECO:0000314"/>
    <property type="project" value="UniProtKB"/>
</dbReference>
<dbReference type="CDD" id="cd08227">
    <property type="entry name" value="PK_STRAD_alpha"/>
    <property type="match status" value="1"/>
</dbReference>
<dbReference type="FunFam" id="3.30.200.20:FF:000130">
    <property type="entry name" value="STE20-related kinase adapter protein alpha"/>
    <property type="match status" value="1"/>
</dbReference>
<dbReference type="FunFam" id="1.10.510.10:FF:000213">
    <property type="entry name" value="STE20-related kinase adapter protein alpha isoform X2"/>
    <property type="match status" value="1"/>
</dbReference>
<dbReference type="Gene3D" id="3.30.200.20">
    <property type="entry name" value="Phosphorylase Kinase, domain 1"/>
    <property type="match status" value="1"/>
</dbReference>
<dbReference type="Gene3D" id="1.10.510.10">
    <property type="entry name" value="Transferase(Phosphotransferase) domain 1"/>
    <property type="match status" value="1"/>
</dbReference>
<dbReference type="IDEAL" id="IID00217"/>
<dbReference type="InterPro" id="IPR011009">
    <property type="entry name" value="Kinase-like_dom_sf"/>
</dbReference>
<dbReference type="InterPro" id="IPR000719">
    <property type="entry name" value="Prot_kinase_dom"/>
</dbReference>
<dbReference type="InterPro" id="IPR047173">
    <property type="entry name" value="STRAD_A/B-like"/>
</dbReference>
<dbReference type="PANTHER" id="PTHR48014">
    <property type="entry name" value="SERINE/THREONINE-PROTEIN KINASE FRAY2"/>
    <property type="match status" value="1"/>
</dbReference>
<dbReference type="PANTHER" id="PTHR48014:SF20">
    <property type="entry name" value="STE20-RELATED KINASE ADAPTER PROTEIN ALPHA"/>
    <property type="match status" value="1"/>
</dbReference>
<dbReference type="Pfam" id="PF00069">
    <property type="entry name" value="Pkinase"/>
    <property type="match status" value="1"/>
</dbReference>
<dbReference type="SUPFAM" id="SSF56112">
    <property type="entry name" value="Protein kinase-like (PK-like)"/>
    <property type="match status" value="1"/>
</dbReference>
<dbReference type="PROSITE" id="PS50011">
    <property type="entry name" value="PROTEIN_KINASE_DOM"/>
    <property type="match status" value="1"/>
</dbReference>